<name>SVMI1_CERCE</name>
<gene>
    <name type="primary">Svmpi-Cce12</name>
</gene>
<evidence type="ECO:0000250" key="1"/>
<evidence type="ECO:0000255" key="2"/>
<evidence type="ECO:0000256" key="3">
    <source>
        <dbReference type="SAM" id="MobiDB-lite"/>
    </source>
</evidence>
<evidence type="ECO:0000269" key="4">
    <source>
    </source>
</evidence>
<evidence type="ECO:0000303" key="5">
    <source>
    </source>
</evidence>
<evidence type="ECO:0000305" key="6"/>
<evidence type="ECO:0000305" key="7">
    <source>
    </source>
</evidence>
<keyword id="KW-0165">Cleavage on pair of basic residues</keyword>
<keyword id="KW-0903">Direct protein sequencing</keyword>
<keyword id="KW-1015">Disulfide bond</keyword>
<keyword id="KW-0382">Hypotensive agent</keyword>
<keyword id="KW-0481">Metalloenzyme inhibitor</keyword>
<keyword id="KW-0483">Metalloprotease inhibitor</keyword>
<keyword id="KW-0646">Protease inhibitor</keyword>
<keyword id="KW-0873">Pyrrolidone carboxylic acid</keyword>
<keyword id="KW-0677">Repeat</keyword>
<keyword id="KW-0964">Secreted</keyword>
<keyword id="KW-0732">Signal</keyword>
<keyword id="KW-0800">Toxin</keyword>
<keyword id="KW-0838">Vasoactive</keyword>
<keyword id="KW-0840">Vasodilator</keyword>
<sequence length="302" mass="35326">MSVSRLAASGLLLVSLLALALDGKPVEKWSPWLWPPRPRPPIPPLQQQKWLDPPIPQQQKWLDPPIPQQQKWLDPPIPQQQKWLNPPIPQQQKWLDPPIPQQQKWLNPPIPQQQKWLNPPIPQQQKWLNPPIPQQQKWLNPPIPQQQKWLDPPIPQQQKWLDPPIPQQQKWLDPPIPQQQKWLNPPIPQQQKWLDPPIPQQQKWLDPPIPQQQKWLNPPIPQQQKWQRPLQPEVPSLMELHQERQKQGRMMHHDEDPGDAAEGPRRQKKEPGKPEGNGCFGKKIDRINAGFGCPKLPPSGGH</sequence>
<accession>A8YPR9</accession>
<accession>A8YPS0</accession>
<comment type="function">
    <text evidence="4">pEKW peptides may serve as metalloproteinase inhibitors during glandular storage. Their inhibition may be instantly disengaged, by dilution or physiochemical change, when venom is injected into tissue of the victim.</text>
</comment>
<comment type="function">
    <molecule>C-type natriuretic peptide</molecule>
    <text evidence="1">Exhibits hypotensive and vasodepressor activity. Acts by activating natriuretic receptors (NPR1 and/or NPR2 and/or NPR3) (By similarity).</text>
</comment>
<comment type="subcellular location">
    <subcellularLocation>
        <location evidence="4">Secreted</location>
    </subcellularLocation>
</comment>
<comment type="tissue specificity">
    <text evidence="7">Expressed by the venom gland.</text>
</comment>
<comment type="similarity">
    <text evidence="6">In the C-terminal section; belongs to the natriuretic peptide family.</text>
</comment>
<proteinExistence type="evidence at protein level"/>
<reference key="1">
    <citation type="journal article" date="2008" name="Biochem. Biophys. Res. Commun.">
        <title>Molecular characterisation of endogenous snake venom metalloproteinase inhibitors.</title>
        <authorList>
            <person name="Wagstaff S.C."/>
            <person name="Favreau P."/>
            <person name="Cheneval O."/>
            <person name="Laing G.D."/>
            <person name="Wilkinson M.C."/>
            <person name="Miller R.L."/>
            <person name="Stoecklin R."/>
            <person name="Harrison R.A."/>
        </authorList>
    </citation>
    <scope>NUCLEOTIDE SEQUENCE [MRNA]</scope>
    <scope>PROTEIN SEQUENCE OF 48-50; 59-61; 70-72; 81-83; 92-94; 103-105; 114-116; 125-127; 136-138; 147-149; 158-160; 169-171; 180-182; 191-193; 202-204; 213-215 AND 224-226</scope>
    <scope>FUNCTION</scope>
    <scope>PYROGLUTAMATE FORMATION AT GLN-48; GLN-59; GLN-70; GLN-81; GLN-92; GLN-103; GLN-114; GLN-125; GLN-136; GLN-147; GLN-158; GLN-169; GLN-180; GLN-191; GLN-202; GLN-213 AND GLN-224</scope>
    <scope>IDENTIFICATION BY MASS SPECTROMETRY</scope>
    <source>
        <tissue>Venom</tissue>
        <tissue>Venom gland</tissue>
    </source>
</reference>
<organism>
    <name type="scientific">Cerastes cerastes</name>
    <name type="common">Horned desert viper</name>
    <dbReference type="NCBI Taxonomy" id="8697"/>
    <lineage>
        <taxon>Eukaryota</taxon>
        <taxon>Metazoa</taxon>
        <taxon>Chordata</taxon>
        <taxon>Craniata</taxon>
        <taxon>Vertebrata</taxon>
        <taxon>Euteleostomi</taxon>
        <taxon>Lepidosauria</taxon>
        <taxon>Squamata</taxon>
        <taxon>Bifurcata</taxon>
        <taxon>Unidentata</taxon>
        <taxon>Episquamata</taxon>
        <taxon>Toxicofera</taxon>
        <taxon>Serpentes</taxon>
        <taxon>Colubroidea</taxon>
        <taxon>Viperidae</taxon>
        <taxon>Viperinae</taxon>
        <taxon>Cerastes</taxon>
    </lineage>
</organism>
<protein>
    <recommendedName>
        <fullName>Snake venom metalloprotease inhibitor 02A10</fullName>
    </recommendedName>
    <alternativeName>
        <fullName>01F09</fullName>
    </alternativeName>
    <component>
        <recommendedName>
            <fullName>Tripeptide pEKW 1</fullName>
        </recommendedName>
    </component>
    <component>
        <recommendedName>
            <fullName>Tripeptide pEKW 2</fullName>
        </recommendedName>
    </component>
    <component>
        <recommendedName>
            <fullName>Tripeptide pEKW 3</fullName>
        </recommendedName>
    </component>
    <component>
        <recommendedName>
            <fullName>Tripeptide pEKW 4</fullName>
        </recommendedName>
    </component>
    <component>
        <recommendedName>
            <fullName>Tripeptide pEKW 5</fullName>
        </recommendedName>
    </component>
    <component>
        <recommendedName>
            <fullName>Tripeptide pEKW 6</fullName>
        </recommendedName>
    </component>
    <component>
        <recommendedName>
            <fullName>Tripeptide pEKW 7</fullName>
        </recommendedName>
    </component>
    <component>
        <recommendedName>
            <fullName>Tripeptide pEKW 8</fullName>
        </recommendedName>
    </component>
    <component>
        <recommendedName>
            <fullName>Tripeptide pEKW 9</fullName>
        </recommendedName>
    </component>
    <component>
        <recommendedName>
            <fullName>Tripeptide pEKW 10</fullName>
        </recommendedName>
    </component>
    <component>
        <recommendedName>
            <fullName>Tripeptide pEKW 11</fullName>
        </recommendedName>
    </component>
    <component>
        <recommendedName>
            <fullName>Tripeptide pEKW 12</fullName>
        </recommendedName>
    </component>
    <component>
        <recommendedName>
            <fullName>Tripeptide pEKW 13</fullName>
        </recommendedName>
    </component>
    <component>
        <recommendedName>
            <fullName>Tripeptide pEKW 14</fullName>
        </recommendedName>
    </component>
    <component>
        <recommendedName>
            <fullName>Tripeptide pEKW 15</fullName>
        </recommendedName>
    </component>
    <component>
        <recommendedName>
            <fullName>Tripeptide pEKW 16</fullName>
        </recommendedName>
    </component>
    <component>
        <recommendedName>
            <fullName>Tripeptide pEKW 17</fullName>
        </recommendedName>
    </component>
    <component>
        <recommendedName>
            <fullName evidence="5">C-type natriuretic peptide</fullName>
            <shortName evidence="5">CNP</shortName>
        </recommendedName>
    </component>
</protein>
<feature type="signal peptide" evidence="2">
    <location>
        <begin position="1"/>
        <end position="23"/>
    </location>
</feature>
<feature type="propeptide" id="PRO_0000335955" evidence="6">
    <location>
        <begin position="24"/>
        <end position="47"/>
    </location>
</feature>
<feature type="peptide" id="PRO_0000335956" description="Tripeptide pEKW 1">
    <location>
        <begin position="48"/>
        <end position="50"/>
    </location>
</feature>
<feature type="propeptide" id="PRO_0000335957" evidence="6">
    <location>
        <begin position="51"/>
        <end position="58"/>
    </location>
</feature>
<feature type="peptide" id="PRO_0000335958" description="Tripeptide pEKW 2">
    <location>
        <begin position="59"/>
        <end position="61"/>
    </location>
</feature>
<feature type="propeptide" id="PRO_0000335959" evidence="6">
    <location>
        <begin position="62"/>
        <end position="69"/>
    </location>
</feature>
<feature type="peptide" id="PRO_0000335960" description="Tripeptide pEKW 3">
    <location>
        <begin position="70"/>
        <end position="72"/>
    </location>
</feature>
<feature type="propeptide" id="PRO_0000335961" evidence="6">
    <location>
        <begin position="73"/>
        <end position="80"/>
    </location>
</feature>
<feature type="peptide" id="PRO_0000335962" description="Tripeptide pEKW 4">
    <location>
        <begin position="81"/>
        <end position="83"/>
    </location>
</feature>
<feature type="propeptide" id="PRO_0000335963" evidence="6">
    <location>
        <begin position="84"/>
        <end position="91"/>
    </location>
</feature>
<feature type="peptide" id="PRO_0000335964" description="Tripeptide pEKW 5">
    <location>
        <begin position="92"/>
        <end position="94"/>
    </location>
</feature>
<feature type="propeptide" id="PRO_0000335965" evidence="6">
    <location>
        <begin position="95"/>
        <end position="102"/>
    </location>
</feature>
<feature type="peptide" id="PRO_0000335966" description="Tripeptide pEKW 6">
    <location>
        <begin position="103"/>
        <end position="105"/>
    </location>
</feature>
<feature type="propeptide" id="PRO_0000335967" evidence="6">
    <location>
        <begin position="106"/>
        <end position="113"/>
    </location>
</feature>
<feature type="peptide" id="PRO_0000335968" description="Tripeptide pEKW 7">
    <location>
        <begin position="114"/>
        <end position="116"/>
    </location>
</feature>
<feature type="propeptide" id="PRO_0000335969" evidence="6">
    <location>
        <begin position="117"/>
        <end position="124"/>
    </location>
</feature>
<feature type="peptide" id="PRO_0000335970" description="Tripeptide pEKW 8">
    <location>
        <begin position="125"/>
        <end position="127"/>
    </location>
</feature>
<feature type="propeptide" id="PRO_0000335971" evidence="6">
    <location>
        <begin position="128"/>
        <end position="135"/>
    </location>
</feature>
<feature type="peptide" id="PRO_0000335972" description="Tripeptide pEKW 9">
    <location>
        <begin position="136"/>
        <end position="138"/>
    </location>
</feature>
<feature type="propeptide" id="PRO_0000335973" evidence="6">
    <location>
        <begin position="139"/>
        <end position="146"/>
    </location>
</feature>
<feature type="peptide" id="PRO_0000335974" description="Tripeptide pEKW 10">
    <location>
        <begin position="147"/>
        <end position="149"/>
    </location>
</feature>
<feature type="propeptide" id="PRO_0000335975" evidence="6">
    <location>
        <begin position="150"/>
        <end position="157"/>
    </location>
</feature>
<feature type="peptide" id="PRO_0000335976" description="Tripeptide pEKW 11">
    <location>
        <begin position="158"/>
        <end position="160"/>
    </location>
</feature>
<feature type="propeptide" id="PRO_0000335977" evidence="6">
    <location>
        <begin position="161"/>
        <end position="168"/>
    </location>
</feature>
<feature type="peptide" id="PRO_0000335978" description="Tripeptide pEKW 12">
    <location>
        <begin position="169"/>
        <end position="171"/>
    </location>
</feature>
<feature type="propeptide" id="PRO_0000335979" evidence="6">
    <location>
        <begin position="172"/>
        <end position="179"/>
    </location>
</feature>
<feature type="peptide" id="PRO_0000335980" description="Tripeptide pEKW 13">
    <location>
        <begin position="180"/>
        <end position="182"/>
    </location>
</feature>
<feature type="propeptide" id="PRO_0000335981" evidence="6">
    <location>
        <begin position="183"/>
        <end position="190"/>
    </location>
</feature>
<feature type="peptide" id="PRO_0000335982" description="Tripeptide pEKW 14">
    <location>
        <begin position="191"/>
        <end position="193"/>
    </location>
</feature>
<feature type="propeptide" id="PRO_0000335983" evidence="6">
    <location>
        <begin position="194"/>
        <end position="201"/>
    </location>
</feature>
<feature type="peptide" id="PRO_0000335984" description="Tripeptide pEKW 15">
    <location>
        <begin position="202"/>
        <end position="204"/>
    </location>
</feature>
<feature type="propeptide" id="PRO_0000335985" evidence="6">
    <location>
        <begin position="205"/>
        <end position="212"/>
    </location>
</feature>
<feature type="peptide" id="PRO_0000335986" description="Tripeptide pEKW 16">
    <location>
        <begin position="213"/>
        <end position="215"/>
    </location>
</feature>
<feature type="propeptide" id="PRO_0000335987" evidence="6">
    <location>
        <begin position="216"/>
        <end position="223"/>
    </location>
</feature>
<feature type="peptide" id="PRO_0000335988" description="Tripeptide pEKW 17">
    <location>
        <begin position="224"/>
        <end position="226"/>
    </location>
</feature>
<feature type="propeptide" id="PRO_0000335989" evidence="6">
    <location>
        <begin position="227"/>
        <end position="273"/>
    </location>
</feature>
<feature type="peptide" id="PRO_0000335990" description="C-type natriuretic peptide" evidence="1">
    <location>
        <begin position="274"/>
        <end position="293"/>
    </location>
</feature>
<feature type="propeptide" id="PRO_0000335991" evidence="6">
    <location>
        <begin position="294"/>
        <end position="302"/>
    </location>
</feature>
<feature type="region of interest" description="Disordered" evidence="3">
    <location>
        <begin position="32"/>
        <end position="302"/>
    </location>
</feature>
<feature type="compositionally biased region" description="Pro residues" evidence="3">
    <location>
        <begin position="33"/>
        <end position="44"/>
    </location>
</feature>
<feature type="compositionally biased region" description="Basic and acidic residues" evidence="3">
    <location>
        <begin position="240"/>
        <end position="255"/>
    </location>
</feature>
<feature type="compositionally biased region" description="Basic and acidic residues" evidence="3">
    <location>
        <begin position="262"/>
        <end position="273"/>
    </location>
</feature>
<feature type="modified residue" description="Pyrrolidone carboxylic acid" evidence="4">
    <location>
        <position position="48"/>
    </location>
</feature>
<feature type="modified residue" description="Pyrrolidone carboxylic acid" evidence="4">
    <location>
        <position position="59"/>
    </location>
</feature>
<feature type="modified residue" description="Pyrrolidone carboxylic acid" evidence="4">
    <location>
        <position position="70"/>
    </location>
</feature>
<feature type="modified residue" description="Pyrrolidone carboxylic acid" evidence="4">
    <location>
        <position position="81"/>
    </location>
</feature>
<feature type="modified residue" description="Pyrrolidone carboxylic acid" evidence="4">
    <location>
        <position position="92"/>
    </location>
</feature>
<feature type="modified residue" description="Pyrrolidone carboxylic acid" evidence="4">
    <location>
        <position position="103"/>
    </location>
</feature>
<feature type="modified residue" description="Pyrrolidone carboxylic acid" evidence="4">
    <location>
        <position position="114"/>
    </location>
</feature>
<feature type="modified residue" description="Pyrrolidone carboxylic acid" evidence="4">
    <location>
        <position position="125"/>
    </location>
</feature>
<feature type="modified residue" description="Pyrrolidone carboxylic acid" evidence="4">
    <location>
        <position position="136"/>
    </location>
</feature>
<feature type="modified residue" description="Pyrrolidone carboxylic acid" evidence="4">
    <location>
        <position position="147"/>
    </location>
</feature>
<feature type="modified residue" description="Pyrrolidone carboxylic acid" evidence="4">
    <location>
        <position position="158"/>
    </location>
</feature>
<feature type="modified residue" description="Pyrrolidone carboxylic acid" evidence="4">
    <location>
        <position position="169"/>
    </location>
</feature>
<feature type="modified residue" description="Pyrrolidone carboxylic acid" evidence="4">
    <location>
        <position position="180"/>
    </location>
</feature>
<feature type="modified residue" description="Pyrrolidone carboxylic acid" evidence="4">
    <location>
        <position position="191"/>
    </location>
</feature>
<feature type="modified residue" description="Pyrrolidone carboxylic acid" evidence="4">
    <location>
        <position position="202"/>
    </location>
</feature>
<feature type="modified residue" description="Pyrrolidone carboxylic acid" evidence="4">
    <location>
        <position position="213"/>
    </location>
</feature>
<feature type="modified residue" description="Pyrrolidone carboxylic acid" evidence="4">
    <location>
        <position position="224"/>
    </location>
</feature>
<feature type="disulfide bond" evidence="1">
    <location>
        <begin position="279"/>
        <end position="293"/>
    </location>
</feature>
<feature type="sequence variant" description="In 01F09.">
    <original>N</original>
    <variation>D</variation>
    <location>
        <position position="85"/>
    </location>
</feature>
<feature type="sequence variant" description="In 01F09.">
    <original>N</original>
    <variation>D</variation>
    <location>
        <position position="107"/>
    </location>
</feature>
<feature type="sequence variant" description="In 01F09.">
    <original>N</original>
    <variation>D</variation>
    <location>
        <position position="129"/>
    </location>
</feature>
<feature type="sequence variant" description="In 01F09.">
    <original>N</original>
    <variation>D</variation>
    <location>
        <position position="140"/>
    </location>
</feature>
<dbReference type="EMBL" id="AM902492">
    <property type="protein sequence ID" value="CAP17274.1"/>
    <property type="molecule type" value="mRNA"/>
</dbReference>
<dbReference type="EMBL" id="AM902493">
    <property type="protein sequence ID" value="CAP17275.1"/>
    <property type="molecule type" value="mRNA"/>
</dbReference>
<dbReference type="GO" id="GO:0005576">
    <property type="term" value="C:extracellular region"/>
    <property type="evidence" value="ECO:0007669"/>
    <property type="project" value="UniProtKB-SubCell"/>
</dbReference>
<dbReference type="GO" id="GO:0030414">
    <property type="term" value="F:peptidase inhibitor activity"/>
    <property type="evidence" value="ECO:0007669"/>
    <property type="project" value="UniProtKB-KW"/>
</dbReference>
<dbReference type="GO" id="GO:0090729">
    <property type="term" value="F:toxin activity"/>
    <property type="evidence" value="ECO:0007669"/>
    <property type="project" value="UniProtKB-KW"/>
</dbReference>
<dbReference type="GO" id="GO:0008217">
    <property type="term" value="P:regulation of blood pressure"/>
    <property type="evidence" value="ECO:0007669"/>
    <property type="project" value="UniProtKB-KW"/>
</dbReference>
<dbReference type="GO" id="GO:0042311">
    <property type="term" value="P:vasodilation"/>
    <property type="evidence" value="ECO:0007669"/>
    <property type="project" value="UniProtKB-KW"/>
</dbReference>